<protein>
    <recommendedName>
        <fullName evidence="2 8">Deoxyhypusine hydroxylase</fullName>
        <shortName evidence="9">hDOHH</shortName>
        <ecNumber evidence="2 3 4 5">1.14.99.29</ecNumber>
    </recommendedName>
    <alternativeName>
        <fullName evidence="2">Deoxyhypusine dioxygenase</fullName>
    </alternativeName>
    <alternativeName>
        <fullName evidence="2">Deoxyhypusine monooxygenase</fullName>
    </alternativeName>
    <alternativeName>
        <fullName evidence="9">HEAT-like repeat-containing protein 1</fullName>
    </alternativeName>
</protein>
<evidence type="ECO:0000250" key="1">
    <source>
        <dbReference type="UniProtKB" id="Q99LN9"/>
    </source>
</evidence>
<evidence type="ECO:0000255" key="2">
    <source>
        <dbReference type="HAMAP-Rule" id="MF_03101"/>
    </source>
</evidence>
<evidence type="ECO:0000269" key="3">
    <source>
    </source>
</evidence>
<evidence type="ECO:0000269" key="4">
    <source>
    </source>
</evidence>
<evidence type="ECO:0000269" key="5">
    <source>
    </source>
</evidence>
<evidence type="ECO:0000269" key="6">
    <source>
    </source>
</evidence>
<evidence type="ECO:0000269" key="7">
    <source>
    </source>
</evidence>
<evidence type="ECO:0000303" key="8">
    <source>
    </source>
</evidence>
<evidence type="ECO:0000303" key="9">
    <source>
    </source>
</evidence>
<evidence type="ECO:0000312" key="10">
    <source>
        <dbReference type="HGNC" id="HGNC:28662"/>
    </source>
</evidence>
<evidence type="ECO:0007744" key="11">
    <source>
        <dbReference type="PDB" id="4D4Z"/>
    </source>
</evidence>
<evidence type="ECO:0007744" key="12">
    <source>
        <dbReference type="PDB" id="4D50"/>
    </source>
</evidence>
<evidence type="ECO:0007744" key="13">
    <source>
    </source>
</evidence>
<evidence type="ECO:0007744" key="14">
    <source>
    </source>
</evidence>
<evidence type="ECO:0007829" key="15">
    <source>
        <dbReference type="PDB" id="4D4Z"/>
    </source>
</evidence>
<accession>Q9BU89</accession>
<accession>O75265</accession>
<dbReference type="EC" id="1.14.99.29" evidence="2 3 4 5"/>
<dbReference type="EMBL" id="AC005551">
    <property type="protein sequence ID" value="AAC33193.1"/>
    <property type="molecule type" value="Genomic_DNA"/>
</dbReference>
<dbReference type="EMBL" id="AC093052">
    <property type="status" value="NOT_ANNOTATED_CDS"/>
    <property type="molecule type" value="Genomic_DNA"/>
</dbReference>
<dbReference type="EMBL" id="BC002817">
    <property type="protein sequence ID" value="AAH02817.1"/>
    <property type="molecule type" value="mRNA"/>
</dbReference>
<dbReference type="EMBL" id="BC009863">
    <property type="protein sequence ID" value="AAH09863.1"/>
    <property type="molecule type" value="mRNA"/>
</dbReference>
<dbReference type="CCDS" id="CCDS12108.1"/>
<dbReference type="RefSeq" id="NP_001138637.1">
    <property type="nucleotide sequence ID" value="NM_001145165.2"/>
</dbReference>
<dbReference type="RefSeq" id="NP_112594.1">
    <property type="nucleotide sequence ID" value="NM_031304.5"/>
</dbReference>
<dbReference type="PDB" id="4D4Z">
    <property type="method" value="X-ray"/>
    <property type="resolution" value="1.70 A"/>
    <property type="chains" value="A/B=1-289"/>
</dbReference>
<dbReference type="PDB" id="4D50">
    <property type="method" value="X-ray"/>
    <property type="resolution" value="1.70 A"/>
    <property type="chains" value="A/B=1-289"/>
</dbReference>
<dbReference type="PDBsum" id="4D4Z"/>
<dbReference type="PDBsum" id="4D50"/>
<dbReference type="SMR" id="Q9BU89"/>
<dbReference type="BioGRID" id="123662">
    <property type="interactions" value="37"/>
</dbReference>
<dbReference type="FunCoup" id="Q9BU89">
    <property type="interactions" value="652"/>
</dbReference>
<dbReference type="IntAct" id="Q9BU89">
    <property type="interactions" value="9"/>
</dbReference>
<dbReference type="STRING" id="9606.ENSP00000398882"/>
<dbReference type="BindingDB" id="Q9BU89"/>
<dbReference type="ChEMBL" id="CHEMBL4523441"/>
<dbReference type="DrugCentral" id="Q9BU89"/>
<dbReference type="GlyGen" id="Q9BU89">
    <property type="glycosylation" value="1 site, 1 O-linked glycan (1 site)"/>
</dbReference>
<dbReference type="iPTMnet" id="Q9BU89"/>
<dbReference type="PhosphoSitePlus" id="Q9BU89"/>
<dbReference type="BioMuta" id="DOHH"/>
<dbReference type="DMDM" id="74733193"/>
<dbReference type="jPOST" id="Q9BU89"/>
<dbReference type="MassIVE" id="Q9BU89"/>
<dbReference type="PaxDb" id="9606-ENSP00000398882"/>
<dbReference type="PeptideAtlas" id="Q9BU89"/>
<dbReference type="ProteomicsDB" id="79065"/>
<dbReference type="Pumba" id="Q9BU89"/>
<dbReference type="Antibodypedia" id="23208">
    <property type="antibodies" value="42 antibodies from 16 providers"/>
</dbReference>
<dbReference type="DNASU" id="83475"/>
<dbReference type="Ensembl" id="ENST00000427575.6">
    <property type="protein sequence ID" value="ENSP00000398882.1"/>
    <property type="gene ID" value="ENSG00000129932.10"/>
</dbReference>
<dbReference type="Ensembl" id="ENST00000672935.1">
    <property type="protein sequence ID" value="ENSP00000500806.1"/>
    <property type="gene ID" value="ENSG00000129932.10"/>
</dbReference>
<dbReference type="GeneID" id="83475"/>
<dbReference type="KEGG" id="hsa:83475"/>
<dbReference type="MANE-Select" id="ENST00000427575.6">
    <property type="protein sequence ID" value="ENSP00000398882.1"/>
    <property type="RefSeq nucleotide sequence ID" value="NM_001145165.2"/>
    <property type="RefSeq protein sequence ID" value="NP_001138637.1"/>
</dbReference>
<dbReference type="UCSC" id="uc002lxs.4">
    <property type="organism name" value="human"/>
</dbReference>
<dbReference type="AGR" id="HGNC:28662"/>
<dbReference type="CTD" id="83475"/>
<dbReference type="DisGeNET" id="83475"/>
<dbReference type="GeneCards" id="DOHH"/>
<dbReference type="HGNC" id="HGNC:28662">
    <property type="gene designation" value="DOHH"/>
</dbReference>
<dbReference type="HPA" id="ENSG00000129932">
    <property type="expression patterns" value="Tissue enhanced (brain)"/>
</dbReference>
<dbReference type="MalaCards" id="DOHH"/>
<dbReference type="MIM" id="611262">
    <property type="type" value="gene"/>
</dbReference>
<dbReference type="MIM" id="620066">
    <property type="type" value="phenotype"/>
</dbReference>
<dbReference type="neXtProt" id="NX_Q9BU89"/>
<dbReference type="OpenTargets" id="ENSG00000129932"/>
<dbReference type="Orphanet" id="528084">
    <property type="disease" value="Non-specific syndromic intellectual disability"/>
</dbReference>
<dbReference type="PharmGKB" id="PA142671678"/>
<dbReference type="VEuPathDB" id="HostDB:ENSG00000129932"/>
<dbReference type="eggNOG" id="KOG0567">
    <property type="taxonomic scope" value="Eukaryota"/>
</dbReference>
<dbReference type="GeneTree" id="ENSGT00500000044957"/>
<dbReference type="HOGENOM" id="CLU_053974_0_0_1"/>
<dbReference type="InParanoid" id="Q9BU89"/>
<dbReference type="OMA" id="LQEPCSI"/>
<dbReference type="OrthoDB" id="421002at2759"/>
<dbReference type="PAN-GO" id="Q9BU89">
    <property type="GO annotations" value="2 GO annotations based on evolutionary models"/>
</dbReference>
<dbReference type="PhylomeDB" id="Q9BU89"/>
<dbReference type="TreeFam" id="TF105626"/>
<dbReference type="BioCyc" id="MetaCyc:HS05318-MONOMER"/>
<dbReference type="BRENDA" id="1.14.99.29">
    <property type="organism ID" value="2681"/>
</dbReference>
<dbReference type="PathwayCommons" id="Q9BU89"/>
<dbReference type="Reactome" id="R-HSA-204626">
    <property type="pathway name" value="Hypusine synthesis from eIF5A-lysine"/>
</dbReference>
<dbReference type="SignaLink" id="Q9BU89"/>
<dbReference type="UniPathway" id="UPA00354"/>
<dbReference type="BioGRID-ORCS" id="83475">
    <property type="hits" value="503 hits in 1162 CRISPR screens"/>
</dbReference>
<dbReference type="EvolutionaryTrace" id="Q9BU89"/>
<dbReference type="GenomeRNAi" id="83475"/>
<dbReference type="Pharos" id="Q9BU89">
    <property type="development level" value="Tbio"/>
</dbReference>
<dbReference type="PRO" id="PR:Q9BU89"/>
<dbReference type="Proteomes" id="UP000005640">
    <property type="component" value="Chromosome 19"/>
</dbReference>
<dbReference type="RNAct" id="Q9BU89">
    <property type="molecule type" value="protein"/>
</dbReference>
<dbReference type="Bgee" id="ENSG00000129932">
    <property type="expression patterns" value="Expressed in inferior vagus X ganglion and 211 other cell types or tissues"/>
</dbReference>
<dbReference type="ExpressionAtlas" id="Q9BU89">
    <property type="expression patterns" value="baseline and differential"/>
</dbReference>
<dbReference type="GO" id="GO:0005829">
    <property type="term" value="C:cytosol"/>
    <property type="evidence" value="ECO:0000304"/>
    <property type="project" value="Reactome"/>
</dbReference>
<dbReference type="GO" id="GO:0019135">
    <property type="term" value="F:deoxyhypusine monooxygenase activity"/>
    <property type="evidence" value="ECO:0000315"/>
    <property type="project" value="UniProtKB"/>
</dbReference>
<dbReference type="GO" id="GO:0005506">
    <property type="term" value="F:iron ion binding"/>
    <property type="evidence" value="ECO:0000314"/>
    <property type="project" value="UniProtKB"/>
</dbReference>
<dbReference type="GO" id="GO:0008612">
    <property type="term" value="P:peptidyl-lysine modification to peptidyl-hypusine"/>
    <property type="evidence" value="ECO:0000315"/>
    <property type="project" value="UniProtKB"/>
</dbReference>
<dbReference type="FunFam" id="1.25.10.10:FF:000099">
    <property type="entry name" value="Deoxyhypusine hydroxylase"/>
    <property type="match status" value="2"/>
</dbReference>
<dbReference type="Gene3D" id="1.25.10.10">
    <property type="entry name" value="Leucine-rich Repeat Variant"/>
    <property type="match status" value="2"/>
</dbReference>
<dbReference type="HAMAP" id="MF_03101">
    <property type="entry name" value="Deoxyhypusine_hydroxylase"/>
    <property type="match status" value="1"/>
</dbReference>
<dbReference type="InterPro" id="IPR011989">
    <property type="entry name" value="ARM-like"/>
</dbReference>
<dbReference type="InterPro" id="IPR016024">
    <property type="entry name" value="ARM-type_fold"/>
</dbReference>
<dbReference type="InterPro" id="IPR027517">
    <property type="entry name" value="Deoxyhypusine_hydroxylase"/>
</dbReference>
<dbReference type="InterPro" id="IPR021133">
    <property type="entry name" value="HEAT_type_2"/>
</dbReference>
<dbReference type="InterPro" id="IPR004155">
    <property type="entry name" value="PBS_lyase_HEAT"/>
</dbReference>
<dbReference type="PANTHER" id="PTHR12697:SF5">
    <property type="entry name" value="DEOXYHYPUSINE HYDROXYLASE"/>
    <property type="match status" value="1"/>
</dbReference>
<dbReference type="PANTHER" id="PTHR12697">
    <property type="entry name" value="PBS LYASE HEAT-LIKE PROTEIN"/>
    <property type="match status" value="1"/>
</dbReference>
<dbReference type="Pfam" id="PF13646">
    <property type="entry name" value="HEAT_2"/>
    <property type="match status" value="2"/>
</dbReference>
<dbReference type="SMART" id="SM00567">
    <property type="entry name" value="EZ_HEAT"/>
    <property type="match status" value="6"/>
</dbReference>
<dbReference type="SUPFAM" id="SSF48371">
    <property type="entry name" value="ARM repeat"/>
    <property type="match status" value="1"/>
</dbReference>
<dbReference type="PROSITE" id="PS50077">
    <property type="entry name" value="HEAT_REPEAT"/>
    <property type="match status" value="1"/>
</dbReference>
<comment type="function">
    <text evidence="1 2 3 4 5">Catalyzes the hydroxylation of the N(6)-(4-aminobutyl)-L-lysine intermediate produced by deoxyhypusine synthase/DHPS on a critical lysine of the eukaryotic translation initiation factor 5A/eIF-5A. This is the second step of the post-translational modification of that lysine into an unusual amino acid residue named hypusine (PubMed:16371467, PubMed:16533814, PubMed:19706422). Hypusination is unique to mature eIF-5A factor and is essential for its function (By similarity).</text>
</comment>
<comment type="catalytic activity">
    <reaction evidence="2 3 4 5">
        <text>[eIF5A protein]-deoxyhypusine + AH2 + O2 = [eIF5A protein]-hypusine + A + H2O</text>
        <dbReference type="Rhea" id="RHEA:14101"/>
        <dbReference type="Rhea" id="RHEA-COMP:10144"/>
        <dbReference type="Rhea" id="RHEA-COMP:12592"/>
        <dbReference type="ChEBI" id="CHEBI:13193"/>
        <dbReference type="ChEBI" id="CHEBI:15377"/>
        <dbReference type="ChEBI" id="CHEBI:15379"/>
        <dbReference type="ChEBI" id="CHEBI:17499"/>
        <dbReference type="ChEBI" id="CHEBI:82657"/>
        <dbReference type="ChEBI" id="CHEBI:91175"/>
        <dbReference type="EC" id="1.14.99.29"/>
    </reaction>
</comment>
<comment type="cofactor">
    <cofactor evidence="2 4 5 6 11 12">
        <name>Fe(2+)</name>
        <dbReference type="ChEBI" id="CHEBI:29033"/>
    </cofactor>
    <text evidence="2 4 5 6 11 12">Binds 2 Fe(2+) ions per subunit.</text>
</comment>
<comment type="biophysicochemical properties">
    <phDependence>
        <text evidence="4">Optimum pH is 8-8.5 at 37 degrees Celsius.</text>
    </phDependence>
</comment>
<comment type="pathway">
    <text evidence="2 3 4 5">Protein modification; eIF5A hypusination.</text>
</comment>
<comment type="interaction">
    <interactant intactId="EBI-6164171">
        <id>Q9BU89</id>
    </interactant>
    <interactant intactId="EBI-373150">
        <id>P63241</id>
        <label>EIF5A</label>
    </interactant>
    <organismsDiffer>false</organismsDiffer>
    <experiments>2</experiments>
</comment>
<comment type="disease" evidence="7">
    <disease id="DI-06518">
        <name>Neurodevelopmental disorder with microcephaly, cerebral atrophy, and visual impairment</name>
        <acronym>NEDMVIC</acronym>
        <description>An autosomal recessive disorder characterized by global developmental delay, intellectual disability, facial dysmorphism, and microcephaly.</description>
        <dbReference type="MIM" id="620066"/>
    </disease>
    <text>The disease is caused by variants affecting the gene represented in this entry.</text>
</comment>
<comment type="similarity">
    <text evidence="2">Belongs to the deoxyhypusine hydroxylase family.</text>
</comment>
<gene>
    <name evidence="2 10" type="primary">DOHH</name>
    <name evidence="9" type="synonym">HLRC1</name>
</gene>
<keyword id="KW-0002">3D-structure</keyword>
<keyword id="KW-0007">Acetylation</keyword>
<keyword id="KW-0903">Direct protein sequencing</keyword>
<keyword id="KW-0225">Disease variant</keyword>
<keyword id="KW-0386">Hypusine biosynthesis</keyword>
<keyword id="KW-0991">Intellectual disability</keyword>
<keyword id="KW-0408">Iron</keyword>
<keyword id="KW-0479">Metal-binding</keyword>
<keyword id="KW-0503">Monooxygenase</keyword>
<keyword id="KW-0560">Oxidoreductase</keyword>
<keyword id="KW-1267">Proteomics identification</keyword>
<keyword id="KW-1185">Reference proteome</keyword>
<keyword id="KW-0677">Repeat</keyword>
<feature type="chain" id="PRO_0000248575" description="Deoxyhypusine hydroxylase">
    <location>
        <begin position="1"/>
        <end position="302"/>
    </location>
</feature>
<feature type="repeat" description="HEAT-like PBS-type 1">
    <location>
        <begin position="54"/>
        <end position="80"/>
    </location>
</feature>
<feature type="repeat" description="HEAT-like PBS-type 2">
    <location>
        <begin position="87"/>
        <end position="113"/>
    </location>
</feature>
<feature type="repeat" description="HEAT-like PBS-type 3">
    <location>
        <begin position="174"/>
        <end position="200"/>
    </location>
</feature>
<feature type="repeat" description="HEAT-like PBS-type 4">
    <location>
        <begin position="205"/>
        <end position="231"/>
    </location>
</feature>
<feature type="repeat" description="HEAT-like PBS-type 5">
    <location>
        <begin position="238"/>
        <end position="264"/>
    </location>
</feature>
<feature type="binding site" evidence="2 4 6 11 12">
    <location>
        <position position="56"/>
    </location>
    <ligand>
        <name>Fe cation</name>
        <dbReference type="ChEBI" id="CHEBI:24875"/>
        <label>1</label>
    </ligand>
</feature>
<feature type="binding site" evidence="2 4 6 11 12">
    <location>
        <position position="89"/>
    </location>
    <ligand>
        <name>Fe cation</name>
        <dbReference type="ChEBI" id="CHEBI:24875"/>
        <label>2</label>
    </ligand>
</feature>
<feature type="binding site" evidence="2 4 6 11 12">
    <location>
        <position position="90"/>
    </location>
    <ligand>
        <name>Fe cation</name>
        <dbReference type="ChEBI" id="CHEBI:24875"/>
        <label>2</label>
    </ligand>
</feature>
<feature type="binding site" evidence="2 4 6 11 12">
    <location>
        <position position="207"/>
    </location>
    <ligand>
        <name>Fe cation</name>
        <dbReference type="ChEBI" id="CHEBI:24875"/>
        <label>2</label>
    </ligand>
</feature>
<feature type="binding site" evidence="2 4 6 11 12">
    <location>
        <position position="240"/>
    </location>
    <ligand>
        <name>Fe cation</name>
        <dbReference type="ChEBI" id="CHEBI:24875"/>
        <label>1</label>
    </ligand>
</feature>
<feature type="binding site" evidence="2 4 6 11 12">
    <location>
        <position position="241"/>
    </location>
    <ligand>
        <name>Fe cation</name>
        <dbReference type="ChEBI" id="CHEBI:24875"/>
        <label>1</label>
    </ligand>
</feature>
<feature type="modified residue" description="N-acetylmethionine" evidence="13 14">
    <location>
        <position position="1"/>
    </location>
</feature>
<feature type="sequence variant" id="VAR_087785" description="In NEDMVIC; uncertain significance." evidence="7">
    <original>P</original>
    <variation>L</variation>
    <location>
        <position position="152"/>
    </location>
</feature>
<feature type="sequence variant" id="VAR_087786" description="In NEDMVIC; uncertain significance." evidence="7">
    <original>N</original>
    <variation>K</variation>
    <location>
        <position position="184"/>
    </location>
</feature>
<feature type="sequence variant" id="VAR_087787" description="In NEDMVIC; uncertain significance." evidence="7">
    <original>P</original>
    <variation>L</variation>
    <location>
        <position position="223"/>
    </location>
</feature>
<feature type="sequence variant" id="VAR_087788" description="In NEDMVIC." evidence="7">
    <original>I</original>
    <variation>T</variation>
    <location>
        <position position="249"/>
    </location>
</feature>
<feature type="sequence variant" id="VAR_087789" description="In NEDMVIC." evidence="7">
    <location>
        <begin position="280"/>
        <end position="302"/>
    </location>
</feature>
<feature type="mutagenesis site" description="Loss of deoxyhypusine monooxygenase activity. Loss of iron-binding." evidence="4">
    <original>H</original>
    <variation>A</variation>
    <location>
        <position position="56"/>
    </location>
</feature>
<feature type="mutagenesis site" description="Loss of deoxyhypusine monooxygenase activity. No effect on iron-binding." evidence="4">
    <original>E</original>
    <variation>A</variation>
    <location>
        <position position="57"/>
    </location>
</feature>
<feature type="mutagenesis site" description="Loss of iron-binding." evidence="6">
    <original>M</original>
    <variation>A</variation>
    <location>
        <position position="86"/>
    </location>
</feature>
<feature type="mutagenesis site" description="No effect on iron-binding. Loss of iron-binding; when associated with L-237." evidence="6">
    <original>M</original>
    <variation>L</variation>
    <location>
        <position position="86"/>
    </location>
</feature>
<feature type="mutagenesis site" description="Loss of deoxyhypusine monooxygenase activity. Loss of iron-binding." evidence="4">
    <original>H</original>
    <variation>A</variation>
    <location>
        <position position="89"/>
    </location>
</feature>
<feature type="mutagenesis site" description="Loss of deoxyhypusine monooxygenase activity. Loss of iron-binding." evidence="4">
    <original>E</original>
    <variation>A</variation>
    <location>
        <position position="90"/>
    </location>
</feature>
<feature type="mutagenesis site" description="Loss of deoxyhypusine monooxygenase activity. Loss of iron-binding." evidence="4">
    <original>H</original>
    <variation>A</variation>
    <location>
        <position position="207"/>
    </location>
</feature>
<feature type="mutagenesis site" description="Loss of deoxyhypusine monooxygenase activity. No effect on iron-binding." evidence="4">
    <original>E</original>
    <variation>A</variation>
    <location>
        <position position="208"/>
    </location>
</feature>
<feature type="mutagenesis site" description="Decreased iron-binding. Loss of iron-binding; when associated with L-86." evidence="6">
    <original>M</original>
    <variation>L</variation>
    <location>
        <position position="237"/>
    </location>
</feature>
<feature type="mutagenesis site" description="Loss of deoxyhypusine monooxygenase activity. Loss of iron-binding." evidence="4">
    <original>H</original>
    <variation>A</variation>
    <location>
        <position position="240"/>
    </location>
</feature>
<feature type="mutagenesis site" description="Loss of deoxyhypusine monooxygenase activity. Loss of iron-binding." evidence="4">
    <original>E</original>
    <variation>A</variation>
    <location>
        <position position="241"/>
    </location>
</feature>
<feature type="helix" evidence="15">
    <location>
        <begin position="1"/>
        <end position="15"/>
    </location>
</feature>
<feature type="helix" evidence="15">
    <location>
        <begin position="21"/>
        <end position="34"/>
    </location>
</feature>
<feature type="helix" evidence="15">
    <location>
        <begin position="37"/>
        <end position="45"/>
    </location>
</feature>
<feature type="helix" evidence="15">
    <location>
        <begin position="46"/>
        <end position="48"/>
    </location>
</feature>
<feature type="helix" evidence="15">
    <location>
        <begin position="52"/>
        <end position="65"/>
    </location>
</feature>
<feature type="helix" evidence="15">
    <location>
        <begin position="68"/>
        <end position="70"/>
    </location>
</feature>
<feature type="helix" evidence="15">
    <location>
        <begin position="71"/>
        <end position="79"/>
    </location>
</feature>
<feature type="helix" evidence="15">
    <location>
        <begin position="85"/>
        <end position="98"/>
    </location>
</feature>
<feature type="helix" evidence="15">
    <location>
        <begin position="101"/>
        <end position="103"/>
    </location>
</feature>
<feature type="helix" evidence="15">
    <location>
        <begin position="104"/>
        <end position="110"/>
    </location>
</feature>
<feature type="helix" evidence="15">
    <location>
        <begin position="116"/>
        <end position="135"/>
    </location>
</feature>
<feature type="helix" evidence="15">
    <location>
        <begin position="158"/>
        <end position="166"/>
    </location>
</feature>
<feature type="helix" evidence="15">
    <location>
        <begin position="172"/>
        <end position="185"/>
    </location>
</feature>
<feature type="helix" evidence="15">
    <location>
        <begin position="187"/>
        <end position="196"/>
    </location>
</feature>
<feature type="helix" evidence="15">
    <location>
        <begin position="197"/>
        <end position="199"/>
    </location>
</feature>
<feature type="helix" evidence="15">
    <location>
        <begin position="203"/>
        <end position="216"/>
    </location>
</feature>
<feature type="helix" evidence="15">
    <location>
        <begin position="219"/>
        <end position="221"/>
    </location>
</feature>
<feature type="helix" evidence="15">
    <location>
        <begin position="222"/>
        <end position="230"/>
    </location>
</feature>
<feature type="helix" evidence="15">
    <location>
        <begin position="236"/>
        <end position="249"/>
    </location>
</feature>
<feature type="helix" evidence="15">
    <location>
        <begin position="252"/>
        <end position="261"/>
    </location>
</feature>
<feature type="helix" evidence="15">
    <location>
        <begin position="267"/>
        <end position="282"/>
    </location>
</feature>
<name>DOHH_HUMAN</name>
<reference key="1">
    <citation type="journal article" date="2004" name="Nature">
        <title>The DNA sequence and biology of human chromosome 19.</title>
        <authorList>
            <person name="Grimwood J."/>
            <person name="Gordon L.A."/>
            <person name="Olsen A.S."/>
            <person name="Terry A."/>
            <person name="Schmutz J."/>
            <person name="Lamerdin J.E."/>
            <person name="Hellsten U."/>
            <person name="Goodstein D."/>
            <person name="Couronne O."/>
            <person name="Tran-Gyamfi M."/>
            <person name="Aerts A."/>
            <person name="Altherr M."/>
            <person name="Ashworth L."/>
            <person name="Bajorek E."/>
            <person name="Black S."/>
            <person name="Branscomb E."/>
            <person name="Caenepeel S."/>
            <person name="Carrano A.V."/>
            <person name="Caoile C."/>
            <person name="Chan Y.M."/>
            <person name="Christensen M."/>
            <person name="Cleland C.A."/>
            <person name="Copeland A."/>
            <person name="Dalin E."/>
            <person name="Dehal P."/>
            <person name="Denys M."/>
            <person name="Detter J.C."/>
            <person name="Escobar J."/>
            <person name="Flowers D."/>
            <person name="Fotopulos D."/>
            <person name="Garcia C."/>
            <person name="Georgescu A.M."/>
            <person name="Glavina T."/>
            <person name="Gomez M."/>
            <person name="Gonzales E."/>
            <person name="Groza M."/>
            <person name="Hammon N."/>
            <person name="Hawkins T."/>
            <person name="Haydu L."/>
            <person name="Ho I."/>
            <person name="Huang W."/>
            <person name="Israni S."/>
            <person name="Jett J."/>
            <person name="Kadner K."/>
            <person name="Kimball H."/>
            <person name="Kobayashi A."/>
            <person name="Larionov V."/>
            <person name="Leem S.-H."/>
            <person name="Lopez F."/>
            <person name="Lou Y."/>
            <person name="Lowry S."/>
            <person name="Malfatti S."/>
            <person name="Martinez D."/>
            <person name="McCready P.M."/>
            <person name="Medina C."/>
            <person name="Morgan J."/>
            <person name="Nelson K."/>
            <person name="Nolan M."/>
            <person name="Ovcharenko I."/>
            <person name="Pitluck S."/>
            <person name="Pollard M."/>
            <person name="Popkie A.P."/>
            <person name="Predki P."/>
            <person name="Quan G."/>
            <person name="Ramirez L."/>
            <person name="Rash S."/>
            <person name="Retterer J."/>
            <person name="Rodriguez A."/>
            <person name="Rogers S."/>
            <person name="Salamov A."/>
            <person name="Salazar A."/>
            <person name="She X."/>
            <person name="Smith D."/>
            <person name="Slezak T."/>
            <person name="Solovyev V."/>
            <person name="Thayer N."/>
            <person name="Tice H."/>
            <person name="Tsai M."/>
            <person name="Ustaszewska A."/>
            <person name="Vo N."/>
            <person name="Wagner M."/>
            <person name="Wheeler J."/>
            <person name="Wu K."/>
            <person name="Xie G."/>
            <person name="Yang J."/>
            <person name="Dubchak I."/>
            <person name="Furey T.S."/>
            <person name="DeJong P."/>
            <person name="Dickson M."/>
            <person name="Gordon D."/>
            <person name="Eichler E.E."/>
            <person name="Pennacchio L.A."/>
            <person name="Richardson P."/>
            <person name="Stubbs L."/>
            <person name="Rokhsar D.S."/>
            <person name="Myers R.M."/>
            <person name="Rubin E.M."/>
            <person name="Lucas S.M."/>
        </authorList>
    </citation>
    <scope>NUCLEOTIDE SEQUENCE [LARGE SCALE GENOMIC DNA]</scope>
</reference>
<reference key="2">
    <citation type="journal article" date="2004" name="Genome Res.">
        <title>The status, quality, and expansion of the NIH full-length cDNA project: the Mammalian Gene Collection (MGC).</title>
        <authorList>
            <consortium name="The MGC Project Team"/>
        </authorList>
    </citation>
    <scope>NUCLEOTIDE SEQUENCE [LARGE SCALE MRNA]</scope>
    <source>
        <tissue>Lung</tissue>
        <tissue>Lymph</tissue>
    </source>
</reference>
<reference key="3">
    <citation type="journal article" date="2006" name="J. Biol. Chem.">
        <title>Deoxyhypusine hydroxylase is an Fe(II)-dependent, HEAT-repeat enzyme. Identification of amino acid residues critical for Fe(II) binding and catalysis.</title>
        <authorList>
            <person name="Kim Y.S."/>
            <person name="Kang K.R."/>
            <person name="Wolff E.C."/>
            <person name="Bell J.K."/>
            <person name="McPhie P."/>
            <person name="Park M.H."/>
        </authorList>
    </citation>
    <scope>PROTEIN SEQUENCE OF 1-7</scope>
    <scope>FUNCTION</scope>
    <scope>CATALYTIC ACTIVITY</scope>
    <scope>PATHWAY</scope>
    <scope>COFACTOR</scope>
    <scope>MUTAGENESIS OF HIS-56; GLU-57; HIS-89; GLU-90; HIS-207; GLU-208; HIS-240 AND GLU-241</scope>
    <scope>BIOPHYSICOCHEMICAL PROPERTIES</scope>
</reference>
<reference key="4">
    <citation type="journal article" date="2006" name="Proc. Natl. Acad. Sci. U.S.A.">
        <title>Molecular cloning, expression, and structural prediction of deoxyhypusine hydroxylase: a HEAT-repeat-containing metalloenzyme.</title>
        <authorList>
            <person name="Park J.-H."/>
            <person name="Aravind L."/>
            <person name="Wolff E.C."/>
            <person name="Kaevel J."/>
            <person name="Kim Y.S."/>
            <person name="Park M.H."/>
        </authorList>
    </citation>
    <scope>FUNCTION</scope>
    <scope>CATALYTIC ACTIVITY</scope>
    <scope>PATHWAY</scope>
</reference>
<reference key="5">
    <citation type="journal article" date="2009" name="Proc. Natl. Acad. Sci. U.S.A.">
        <title>Human deoxyhypusine hydroxylase, an enzyme involved in regulating cell growth, activates O(2) with a nonheme diiron center.</title>
        <authorList>
            <person name="Vu V.V."/>
            <person name="Emerson J.P."/>
            <person name="Martinho M."/>
            <person name="Kim Y.S."/>
            <person name="Munck E."/>
            <person name="Park M.H."/>
            <person name="Que L. Jr."/>
        </authorList>
    </citation>
    <scope>FUNCTION</scope>
    <scope>CATALYTIC ACTIVITY</scope>
    <scope>COFACTOR</scope>
    <scope>PATHWAY</scope>
</reference>
<reference key="6">
    <citation type="journal article" date="2011" name="BMC Syst. Biol.">
        <title>Initial characterization of the human central proteome.</title>
        <authorList>
            <person name="Burkard T.R."/>
            <person name="Planyavsky M."/>
            <person name="Kaupe I."/>
            <person name="Breitwieser F.P."/>
            <person name="Buerckstuemmer T."/>
            <person name="Bennett K.L."/>
            <person name="Superti-Furga G."/>
            <person name="Colinge J."/>
        </authorList>
    </citation>
    <scope>IDENTIFICATION BY MASS SPECTROMETRY [LARGE SCALE ANALYSIS]</scope>
</reference>
<reference key="7">
    <citation type="journal article" date="2012" name="Mol. Cell. Proteomics">
        <title>Comparative large-scale characterisation of plant vs. mammal proteins reveals similar and idiosyncratic N-alpha acetylation features.</title>
        <authorList>
            <person name="Bienvenut W.V."/>
            <person name="Sumpton D."/>
            <person name="Martinez A."/>
            <person name="Lilla S."/>
            <person name="Espagne C."/>
            <person name="Meinnel T."/>
            <person name="Giglione C."/>
        </authorList>
    </citation>
    <scope>ACETYLATION [LARGE SCALE ANALYSIS] AT MET-1</scope>
    <scope>IDENTIFICATION BY MASS SPECTROMETRY [LARGE SCALE ANALYSIS]</scope>
</reference>
<reference key="8">
    <citation type="journal article" date="2012" name="Proc. Natl. Acad. Sci. U.S.A.">
        <title>N-terminal acetylome analyses and functional insights of the N-terminal acetyltransferase NatB.</title>
        <authorList>
            <person name="Van Damme P."/>
            <person name="Lasa M."/>
            <person name="Polevoda B."/>
            <person name="Gazquez C."/>
            <person name="Elosegui-Artola A."/>
            <person name="Kim D.S."/>
            <person name="De Juan-Pardo E."/>
            <person name="Demeyer K."/>
            <person name="Hole K."/>
            <person name="Larrea E."/>
            <person name="Timmerman E."/>
            <person name="Prieto J."/>
            <person name="Arnesen T."/>
            <person name="Sherman F."/>
            <person name="Gevaert K."/>
            <person name="Aldabe R."/>
        </authorList>
    </citation>
    <scope>ACETYLATION [LARGE SCALE ANALYSIS] AT MET-1</scope>
    <scope>IDENTIFICATION BY MASS SPECTROMETRY [LARGE SCALE ANALYSIS]</scope>
</reference>
<reference evidence="11 12" key="9">
    <citation type="journal article" date="2015" name="Structure">
        <title>Crystal Structure of the Peroxo-diiron(III) Intermediate of Deoxyhypusine Hydroxylase, an Oxygenase Involved in Hypusination.</title>
        <authorList>
            <person name="Han Z."/>
            <person name="Sakai N."/>
            <person name="Bottger L.H."/>
            <person name="Klinke S."/>
            <person name="Hauber J."/>
            <person name="Trautwein A.X."/>
            <person name="Hilgenfeld R."/>
        </authorList>
    </citation>
    <scope>X-RAY CRYSTALLOGRAPHY (1.70 ANGSTROMS) OF 1-289 IN COMPLEX WITH IRON</scope>
    <scope>COFACTOR</scope>
    <scope>MUTAGENESIS OF MET-86 AND MET-237</scope>
</reference>
<reference key="10">
    <citation type="journal article" date="2022" name="Am. J. Hum. Genet.">
        <title>Bi-allelic variants in DOHH, catalyzing the last step of hypusine biosynthesis, are associated with a neurodevelopmental disorder.</title>
        <authorList>
            <person name="Ziegler A."/>
            <person name="Steindl K."/>
            <person name="Hanner A.S."/>
            <person name="Kumar Kar R."/>
            <person name="Prouteau C."/>
            <person name="Boland A."/>
            <person name="Deleuze J.F."/>
            <person name="Coubes C."/>
            <person name="Bezieau S."/>
            <person name="Kuery S."/>
            <person name="Maystadt I."/>
            <person name="Le Mao M."/>
            <person name="Lenaers G."/>
            <person name="Navet B."/>
            <person name="Faivre L."/>
            <person name="Tran Mau-Them F."/>
            <person name="Zanoni P."/>
            <person name="Chung W.K."/>
            <person name="Rauch A."/>
            <person name="Bonneau D."/>
            <person name="Park M.H."/>
        </authorList>
    </citation>
    <scope>VARIANTS NEDMVIC LEU-152; LYS-184; LEU-223; THR-249 AND 280-TYR--SER-302 DEL</scope>
    <scope>INVOLVEMENT IN NEDMVIC</scope>
</reference>
<sequence length="302" mass="32904">MVTEQEVDAIGQTLVDPKQPLQARFRALFTLRGLGGPGAIAWISQAFDDDSALLKHELAYCLGQMQDARAIPMLVDVLQDTRQEPMVRHEAGEALGAIGDPEVLEILKQYSSDPVIEVAETCQLAVRRLEWLQQHGGEPAAGPYLSVDPAPPAEERDVGRLREALLDESRPLFERYRAMFALRNAGGEEAALALAEGLHCGSALFRHEVGYVLGQLQHEAAVPQLAAALARCTENPMVRHECAEALGAIARPACLAALQAHADDPERVVRESCEVALDMYEHETGRAFQYADGLEQLRGAPS</sequence>
<proteinExistence type="evidence at protein level"/>
<organism>
    <name type="scientific">Homo sapiens</name>
    <name type="common">Human</name>
    <dbReference type="NCBI Taxonomy" id="9606"/>
    <lineage>
        <taxon>Eukaryota</taxon>
        <taxon>Metazoa</taxon>
        <taxon>Chordata</taxon>
        <taxon>Craniata</taxon>
        <taxon>Vertebrata</taxon>
        <taxon>Euteleostomi</taxon>
        <taxon>Mammalia</taxon>
        <taxon>Eutheria</taxon>
        <taxon>Euarchontoglires</taxon>
        <taxon>Primates</taxon>
        <taxon>Haplorrhini</taxon>
        <taxon>Catarrhini</taxon>
        <taxon>Hominidae</taxon>
        <taxon>Homo</taxon>
    </lineage>
</organism>